<keyword id="KW-0963">Cytoplasm</keyword>
<keyword id="KW-0328">Glycosyltransferase</keyword>
<keyword id="KW-0660">Purine salvage</keyword>
<keyword id="KW-0808">Transferase</keyword>
<name>APT_THESQ</name>
<reference key="1">
    <citation type="journal article" date="2011" name="J. Bacteriol.">
        <title>Genome sequence of Thermotoga sp. strain RQ2, a hyperthermophilic bacterium isolated from a geothermally heated region of the seafloor near Ribeira Quente, the Azores.</title>
        <authorList>
            <person name="Swithers K.S."/>
            <person name="DiPippo J.L."/>
            <person name="Bruce D.C."/>
            <person name="Detter C."/>
            <person name="Tapia R."/>
            <person name="Han S."/>
            <person name="Saunders E."/>
            <person name="Goodwin L.A."/>
            <person name="Han J."/>
            <person name="Woyke T."/>
            <person name="Pitluck S."/>
            <person name="Pennacchio L."/>
            <person name="Nolan M."/>
            <person name="Mikhailova N."/>
            <person name="Lykidis A."/>
            <person name="Land M.L."/>
            <person name="Brettin T."/>
            <person name="Stetter K.O."/>
            <person name="Nelson K.E."/>
            <person name="Gogarten J.P."/>
            <person name="Noll K.M."/>
        </authorList>
    </citation>
    <scope>NUCLEOTIDE SEQUENCE [LARGE SCALE GENOMIC DNA]</scope>
    <source>
        <strain>RQ2</strain>
    </source>
</reference>
<comment type="function">
    <text evidence="1">Catalyzes a salvage reaction resulting in the formation of AMP, that is energically less costly than de novo synthesis.</text>
</comment>
<comment type="catalytic activity">
    <reaction evidence="1">
        <text>AMP + diphosphate = 5-phospho-alpha-D-ribose 1-diphosphate + adenine</text>
        <dbReference type="Rhea" id="RHEA:16609"/>
        <dbReference type="ChEBI" id="CHEBI:16708"/>
        <dbReference type="ChEBI" id="CHEBI:33019"/>
        <dbReference type="ChEBI" id="CHEBI:58017"/>
        <dbReference type="ChEBI" id="CHEBI:456215"/>
        <dbReference type="EC" id="2.4.2.7"/>
    </reaction>
</comment>
<comment type="pathway">
    <text evidence="1">Purine metabolism; AMP biosynthesis via salvage pathway; AMP from adenine: step 1/1.</text>
</comment>
<comment type="subunit">
    <text evidence="1">Homodimer.</text>
</comment>
<comment type="subcellular location">
    <subcellularLocation>
        <location evidence="1">Cytoplasm</location>
    </subcellularLocation>
</comment>
<comment type="similarity">
    <text evidence="1">Belongs to the purine/pyrimidine phosphoribosyltransferase family.</text>
</comment>
<accession>B1LBU1</accession>
<dbReference type="EC" id="2.4.2.7" evidence="1"/>
<dbReference type="EMBL" id="CP000969">
    <property type="protein sequence ID" value="ACB09789.1"/>
    <property type="molecule type" value="Genomic_DNA"/>
</dbReference>
<dbReference type="RefSeq" id="WP_012311135.1">
    <property type="nucleotide sequence ID" value="NC_010483.1"/>
</dbReference>
<dbReference type="SMR" id="B1LBU1"/>
<dbReference type="KEGG" id="trq:TRQ2_1445"/>
<dbReference type="HOGENOM" id="CLU_063339_3_0_0"/>
<dbReference type="UniPathway" id="UPA00588">
    <property type="reaction ID" value="UER00646"/>
</dbReference>
<dbReference type="Proteomes" id="UP000001687">
    <property type="component" value="Chromosome"/>
</dbReference>
<dbReference type="GO" id="GO:0005737">
    <property type="term" value="C:cytoplasm"/>
    <property type="evidence" value="ECO:0007669"/>
    <property type="project" value="UniProtKB-SubCell"/>
</dbReference>
<dbReference type="GO" id="GO:0002055">
    <property type="term" value="F:adenine binding"/>
    <property type="evidence" value="ECO:0007669"/>
    <property type="project" value="TreeGrafter"/>
</dbReference>
<dbReference type="GO" id="GO:0003999">
    <property type="term" value="F:adenine phosphoribosyltransferase activity"/>
    <property type="evidence" value="ECO:0007669"/>
    <property type="project" value="UniProtKB-UniRule"/>
</dbReference>
<dbReference type="GO" id="GO:0016208">
    <property type="term" value="F:AMP binding"/>
    <property type="evidence" value="ECO:0007669"/>
    <property type="project" value="TreeGrafter"/>
</dbReference>
<dbReference type="GO" id="GO:0006168">
    <property type="term" value="P:adenine salvage"/>
    <property type="evidence" value="ECO:0007669"/>
    <property type="project" value="InterPro"/>
</dbReference>
<dbReference type="GO" id="GO:0044209">
    <property type="term" value="P:AMP salvage"/>
    <property type="evidence" value="ECO:0007669"/>
    <property type="project" value="UniProtKB-UniRule"/>
</dbReference>
<dbReference type="GO" id="GO:0006166">
    <property type="term" value="P:purine ribonucleoside salvage"/>
    <property type="evidence" value="ECO:0007669"/>
    <property type="project" value="UniProtKB-KW"/>
</dbReference>
<dbReference type="CDD" id="cd06223">
    <property type="entry name" value="PRTases_typeI"/>
    <property type="match status" value="1"/>
</dbReference>
<dbReference type="FunFam" id="3.40.50.2020:FF:000021">
    <property type="entry name" value="Adenine phosphoribosyltransferase"/>
    <property type="match status" value="1"/>
</dbReference>
<dbReference type="Gene3D" id="3.40.50.2020">
    <property type="match status" value="1"/>
</dbReference>
<dbReference type="HAMAP" id="MF_00004">
    <property type="entry name" value="Aden_phosphoribosyltr"/>
    <property type="match status" value="1"/>
</dbReference>
<dbReference type="InterPro" id="IPR005764">
    <property type="entry name" value="Ade_phspho_trans"/>
</dbReference>
<dbReference type="InterPro" id="IPR000836">
    <property type="entry name" value="PRibTrfase_dom"/>
</dbReference>
<dbReference type="InterPro" id="IPR029057">
    <property type="entry name" value="PRTase-like"/>
</dbReference>
<dbReference type="InterPro" id="IPR050054">
    <property type="entry name" value="UPRTase/APRTase"/>
</dbReference>
<dbReference type="NCBIfam" id="TIGR01090">
    <property type="entry name" value="apt"/>
    <property type="match status" value="1"/>
</dbReference>
<dbReference type="NCBIfam" id="NF002633">
    <property type="entry name" value="PRK02304.1-2"/>
    <property type="match status" value="1"/>
</dbReference>
<dbReference type="NCBIfam" id="NF002634">
    <property type="entry name" value="PRK02304.1-3"/>
    <property type="match status" value="1"/>
</dbReference>
<dbReference type="NCBIfam" id="NF002636">
    <property type="entry name" value="PRK02304.1-5"/>
    <property type="match status" value="1"/>
</dbReference>
<dbReference type="PANTHER" id="PTHR32315">
    <property type="entry name" value="ADENINE PHOSPHORIBOSYLTRANSFERASE"/>
    <property type="match status" value="1"/>
</dbReference>
<dbReference type="PANTHER" id="PTHR32315:SF3">
    <property type="entry name" value="ADENINE PHOSPHORIBOSYLTRANSFERASE"/>
    <property type="match status" value="1"/>
</dbReference>
<dbReference type="Pfam" id="PF00156">
    <property type="entry name" value="Pribosyltran"/>
    <property type="match status" value="1"/>
</dbReference>
<dbReference type="SUPFAM" id="SSF53271">
    <property type="entry name" value="PRTase-like"/>
    <property type="match status" value="1"/>
</dbReference>
<dbReference type="PROSITE" id="PS00103">
    <property type="entry name" value="PUR_PYR_PR_TRANSFER"/>
    <property type="match status" value="1"/>
</dbReference>
<evidence type="ECO:0000255" key="1">
    <source>
        <dbReference type="HAMAP-Rule" id="MF_00004"/>
    </source>
</evidence>
<protein>
    <recommendedName>
        <fullName evidence="1">Adenine phosphoribosyltransferase</fullName>
        <shortName evidence="1">APRT</shortName>
        <ecNumber evidence="1">2.4.2.7</ecNumber>
    </recommendedName>
</protein>
<sequence>MDLKRFIRDIPDFPQKGIVFRDITPLLRNQEAFKEAIDRMCELVFDKEFDLVVAPEARGFILGAAMAYKLGKGFVPVRKPGKLPYKTVYEEYQLEYGTEQLHIHEDAIEKGQKVLIVDDVLATGGTAEALIRLVKKLGGEVVSLAFLVELSYLEPRKRLEGYDVKTLIVY</sequence>
<feature type="chain" id="PRO_1000089015" description="Adenine phosphoribosyltransferase">
    <location>
        <begin position="1"/>
        <end position="170"/>
    </location>
</feature>
<proteinExistence type="inferred from homology"/>
<organism>
    <name type="scientific">Thermotoga sp. (strain RQ2)</name>
    <dbReference type="NCBI Taxonomy" id="126740"/>
    <lineage>
        <taxon>Bacteria</taxon>
        <taxon>Thermotogati</taxon>
        <taxon>Thermotogota</taxon>
        <taxon>Thermotogae</taxon>
        <taxon>Thermotogales</taxon>
        <taxon>Thermotogaceae</taxon>
        <taxon>Thermotoga</taxon>
    </lineage>
</organism>
<gene>
    <name evidence="1" type="primary">apt</name>
    <name type="ordered locus">TRQ2_1445</name>
</gene>